<organism>
    <name type="scientific">Loxosceles gaucho</name>
    <name type="common">Spider</name>
    <dbReference type="NCBI Taxonomy" id="58216"/>
    <lineage>
        <taxon>Eukaryota</taxon>
        <taxon>Metazoa</taxon>
        <taxon>Ecdysozoa</taxon>
        <taxon>Arthropoda</taxon>
        <taxon>Chelicerata</taxon>
        <taxon>Arachnida</taxon>
        <taxon>Araneae</taxon>
        <taxon>Araneomorphae</taxon>
        <taxon>Haplogynae</taxon>
        <taxon>Scytodoidea</taxon>
        <taxon>Sicariidae</taxon>
        <taxon>Loxosceles</taxon>
    </lineage>
</organism>
<sequence>ADSRKPI</sequence>
<name>BX3_LOXGA</name>
<keyword id="KW-0204">Cytolysis</keyword>
<keyword id="KW-1061">Dermonecrotic toxin</keyword>
<keyword id="KW-0903">Direct protein sequencing</keyword>
<keyword id="KW-1015">Disulfide bond</keyword>
<keyword id="KW-0354">Hemolysis</keyword>
<keyword id="KW-0442">Lipid degradation</keyword>
<keyword id="KW-0443">Lipid metabolism</keyword>
<keyword id="KW-0456">Lyase</keyword>
<keyword id="KW-0460">Magnesium</keyword>
<keyword id="KW-0479">Metal-binding</keyword>
<keyword id="KW-0964">Secreted</keyword>
<keyword id="KW-0800">Toxin</keyword>
<protein>
    <recommendedName>
        <fullName>Dermonecrotic toxin LgSicTox-beta-LOXN3</fullName>
        <ecNumber evidence="5">4.6.1.-</ecNumber>
    </recommendedName>
    <alternativeName>
        <fullName>Phospholipase D</fullName>
        <shortName>PLD</shortName>
    </alternativeName>
    <alternativeName>
        <fullName>Sphingomyelin phosphodiesterase D</fullName>
        <shortName>SMD</shortName>
        <shortName>SMase D</shortName>
        <shortName>Sphingomyelinase D</shortName>
    </alternativeName>
</protein>
<evidence type="ECO:0000250" key="1"/>
<evidence type="ECO:0000250" key="2">
    <source>
        <dbReference type="UniProtKB" id="A0A0D4WTV1"/>
    </source>
</evidence>
<evidence type="ECO:0000250" key="3">
    <source>
        <dbReference type="UniProtKB" id="A0A0D4WV12"/>
    </source>
</evidence>
<evidence type="ECO:0000250" key="4">
    <source>
        <dbReference type="UniProtKB" id="P0CE80"/>
    </source>
</evidence>
<evidence type="ECO:0000250" key="5">
    <source>
        <dbReference type="UniProtKB" id="Q4ZFU2"/>
    </source>
</evidence>
<evidence type="ECO:0000250" key="6">
    <source>
        <dbReference type="UniProtKB" id="Q8I914"/>
    </source>
</evidence>
<evidence type="ECO:0000269" key="7">
    <source>
    </source>
</evidence>
<evidence type="ECO:0000305" key="8"/>
<evidence type="ECO:0000305" key="9">
    <source>
    </source>
</evidence>
<proteinExistence type="evidence at protein level"/>
<accession>P0C2K5</accession>
<dbReference type="EC" id="4.6.1.-" evidence="5"/>
<dbReference type="ArachnoServer" id="AS000152">
    <property type="toxin name" value="Sphingomyelinase D (LOXN3) (N-terminal fragment)"/>
</dbReference>
<dbReference type="GO" id="GO:0005576">
    <property type="term" value="C:extracellular region"/>
    <property type="evidence" value="ECO:0007669"/>
    <property type="project" value="UniProtKB-SubCell"/>
</dbReference>
<dbReference type="GO" id="GO:0016829">
    <property type="term" value="F:lyase activity"/>
    <property type="evidence" value="ECO:0007669"/>
    <property type="project" value="UniProtKB-KW"/>
</dbReference>
<dbReference type="GO" id="GO:0046872">
    <property type="term" value="F:metal ion binding"/>
    <property type="evidence" value="ECO:0007669"/>
    <property type="project" value="UniProtKB-KW"/>
</dbReference>
<dbReference type="GO" id="GO:0090729">
    <property type="term" value="F:toxin activity"/>
    <property type="evidence" value="ECO:0007669"/>
    <property type="project" value="UniProtKB-KW"/>
</dbReference>
<dbReference type="GO" id="GO:0031640">
    <property type="term" value="P:killing of cells of another organism"/>
    <property type="evidence" value="ECO:0007669"/>
    <property type="project" value="UniProtKB-KW"/>
</dbReference>
<dbReference type="GO" id="GO:0016042">
    <property type="term" value="P:lipid catabolic process"/>
    <property type="evidence" value="ECO:0007669"/>
    <property type="project" value="UniProtKB-KW"/>
</dbReference>
<feature type="chain" id="PRO_0000279562" description="Dermonecrotic toxin LgSicTox-beta-LOXN3">
    <location>
        <begin position="1"/>
        <end position="7" status="greater than"/>
    </location>
</feature>
<feature type="non-terminal residue">
    <location>
        <position position="7"/>
    </location>
</feature>
<reference key="1">
    <citation type="journal article" date="2005" name="Proteomics">
        <title>Proteome analysis of brown spider venom: identification of loxnecrogin isoforms in Loxosceles gaucho venom.</title>
        <authorList>
            <person name="Machado L.F."/>
            <person name="Laugesen S."/>
            <person name="Botelho E.D."/>
            <person name="Ricart C.A.O."/>
            <person name="Fontes W."/>
            <person name="Barbaro K.C."/>
            <person name="Roepstorff P."/>
            <person name="Sousa M.V."/>
        </authorList>
    </citation>
    <scope>PROTEIN SEQUENCE</scope>
    <scope>SUBCELLULAR LOCATION</scope>
    <source>
        <tissue>Venom</tissue>
    </source>
</reference>
<comment type="function">
    <text evidence="2 4">Dermonecrotic toxins cleave the phosphodiester linkage between the phosphate and headgroup of certain phospholipids (sphingolipid and lysolipid substrates), forming an alcohol (often choline) and a cyclic phosphate (By similarity). This toxin acts on sphingomyelin (SM) (By similarity). It may also act on ceramide phosphoethanolamine (CPE), lysophosphatidylcholine (LPC) and lysophosphatidylethanolamine (LPE), but not on lysophosphatidylserine (LPS), and lysophosphatidylglycerol (LPG) (By similarity). It acts by transphosphatidylation, releasing exclusively cyclic phosphate products as second products (By similarity). Induces dermonecrosis, hemolysis, increased vascular permeability, edema, inflammatory response, and platelet aggregation (By similarity).</text>
</comment>
<comment type="catalytic activity">
    <reaction evidence="2">
        <text>an N-(acyl)-sphingosylphosphocholine = an N-(acyl)-sphingosyl-1,3-cyclic phosphate + choline</text>
        <dbReference type="Rhea" id="RHEA:60652"/>
        <dbReference type="ChEBI" id="CHEBI:15354"/>
        <dbReference type="ChEBI" id="CHEBI:64583"/>
        <dbReference type="ChEBI" id="CHEBI:143892"/>
    </reaction>
</comment>
<comment type="catalytic activity">
    <reaction evidence="2">
        <text>an N-(acyl)-sphingosylphosphoethanolamine = an N-(acyl)-sphingosyl-1,3-cyclic phosphate + ethanolamine</text>
        <dbReference type="Rhea" id="RHEA:60648"/>
        <dbReference type="ChEBI" id="CHEBI:57603"/>
        <dbReference type="ChEBI" id="CHEBI:143891"/>
        <dbReference type="ChEBI" id="CHEBI:143892"/>
    </reaction>
</comment>
<comment type="catalytic activity">
    <reaction evidence="2">
        <text>a 1-acyl-sn-glycero-3-phosphocholine = a 1-acyl-sn-glycero-2,3-cyclic phosphate + choline</text>
        <dbReference type="Rhea" id="RHEA:60700"/>
        <dbReference type="ChEBI" id="CHEBI:15354"/>
        <dbReference type="ChEBI" id="CHEBI:58168"/>
        <dbReference type="ChEBI" id="CHEBI:143947"/>
    </reaction>
</comment>
<comment type="catalytic activity">
    <reaction evidence="2">
        <text>a 1-acyl-sn-glycero-3-phosphoethanolamine = a 1-acyl-sn-glycero-2,3-cyclic phosphate + ethanolamine</text>
        <dbReference type="Rhea" id="RHEA:60704"/>
        <dbReference type="ChEBI" id="CHEBI:57603"/>
        <dbReference type="ChEBI" id="CHEBI:64381"/>
        <dbReference type="ChEBI" id="CHEBI:143947"/>
    </reaction>
</comment>
<comment type="cofactor">
    <cofactor evidence="6">
        <name>Mg(2+)</name>
        <dbReference type="ChEBI" id="CHEBI:18420"/>
    </cofactor>
    <text evidence="6">Binds 1 Mg(2+) ion per subunit.</text>
</comment>
<comment type="subcellular location">
    <subcellularLocation>
        <location evidence="7">Secreted</location>
    </subcellularLocation>
</comment>
<comment type="tissue specificity">
    <text evidence="9">Expressed by the venom gland.</text>
</comment>
<comment type="PTM">
    <text evidence="1">Contains 2 disulfide bonds.</text>
</comment>
<comment type="similarity">
    <text evidence="8">Belongs to the arthropod phospholipase D family.</text>
</comment>
<comment type="caution">
    <text evidence="2 3 5">The most common activity assay for dermonecrotic toxins detects enzymatic activity by monitoring choline release from substrate. Liberation of choline from sphingomyelin (SM) or lysophosphatidylcholine (LPC) is commonly assumed to result from substrate hydrolysis, giving either ceramide-1-phosphate (C1P) or lysophosphatidic acid (LPA), respectively, as a second product. However, two studies from Lajoie and colleagues (2013 and 2015) report the observation of exclusive formation of cyclic phosphate products as second products, resulting from intramolecular transphosphatidylation. Cyclic phosphates have vastly different biological properties from their monoester counterparts, and they may be relevant to the pathology of brown spider envenomation.</text>
</comment>